<proteinExistence type="inferred from homology"/>
<name>ENGB_MARSD</name>
<evidence type="ECO:0000255" key="1">
    <source>
        <dbReference type="HAMAP-Rule" id="MF_00321"/>
    </source>
</evidence>
<organism>
    <name type="scientific">Maridesulfovibrio salexigens (strain ATCC 14822 / DSM 2638 / NCIMB 8403 / VKM B-1763)</name>
    <name type="common">Desulfovibrio salexigens</name>
    <dbReference type="NCBI Taxonomy" id="526222"/>
    <lineage>
        <taxon>Bacteria</taxon>
        <taxon>Pseudomonadati</taxon>
        <taxon>Thermodesulfobacteriota</taxon>
        <taxon>Desulfovibrionia</taxon>
        <taxon>Desulfovibrionales</taxon>
        <taxon>Desulfovibrionaceae</taxon>
        <taxon>Maridesulfovibrio</taxon>
    </lineage>
</organism>
<gene>
    <name evidence="1" type="primary">engB</name>
    <name type="ordered locus">Desal_1893</name>
</gene>
<sequence length="201" mass="22773">MDNTLTLIKTVYEINQLEEIAAPQIILAGRSNVGKSSLINCLASRKKLAKISSTPGKTRSLNYYEVSPHGYYIVDLPGYGYARCSKTERAKWAKLIDKYLLDNAYVAAAAVLLDSRHNPQQNDLDLISYFKHCNIPIIPIMTKSDKTKQKDRSKVQKKWEDILKVKPICVSSKTGMNRTRLWNLLDVTAIPELAEIEEETE</sequence>
<feature type="chain" id="PRO_1000205121" description="Probable GTP-binding protein EngB">
    <location>
        <begin position="1"/>
        <end position="201"/>
    </location>
</feature>
<feature type="domain" description="EngB-type G" evidence="1">
    <location>
        <begin position="21"/>
        <end position="191"/>
    </location>
</feature>
<feature type="binding site" evidence="1">
    <location>
        <begin position="29"/>
        <end position="36"/>
    </location>
    <ligand>
        <name>GTP</name>
        <dbReference type="ChEBI" id="CHEBI:37565"/>
    </ligand>
</feature>
<feature type="binding site" evidence="1">
    <location>
        <position position="36"/>
    </location>
    <ligand>
        <name>Mg(2+)</name>
        <dbReference type="ChEBI" id="CHEBI:18420"/>
    </ligand>
</feature>
<feature type="binding site" evidence="1">
    <location>
        <begin position="56"/>
        <end position="60"/>
    </location>
    <ligand>
        <name>GTP</name>
        <dbReference type="ChEBI" id="CHEBI:37565"/>
    </ligand>
</feature>
<feature type="binding site" evidence="1">
    <location>
        <position position="58"/>
    </location>
    <ligand>
        <name>Mg(2+)</name>
        <dbReference type="ChEBI" id="CHEBI:18420"/>
    </ligand>
</feature>
<feature type="binding site" evidence="1">
    <location>
        <begin position="75"/>
        <end position="78"/>
    </location>
    <ligand>
        <name>GTP</name>
        <dbReference type="ChEBI" id="CHEBI:37565"/>
    </ligand>
</feature>
<feature type="binding site" evidence="1">
    <location>
        <begin position="142"/>
        <end position="145"/>
    </location>
    <ligand>
        <name>GTP</name>
        <dbReference type="ChEBI" id="CHEBI:37565"/>
    </ligand>
</feature>
<feature type="binding site" evidence="1">
    <location>
        <begin position="168"/>
        <end position="172"/>
    </location>
    <ligand>
        <name>GTP</name>
        <dbReference type="ChEBI" id="CHEBI:37565"/>
    </ligand>
</feature>
<protein>
    <recommendedName>
        <fullName evidence="1">Probable GTP-binding protein EngB</fullName>
    </recommendedName>
</protein>
<comment type="function">
    <text evidence="1">Necessary for normal cell division and for the maintenance of normal septation.</text>
</comment>
<comment type="cofactor">
    <cofactor evidence="1">
        <name>Mg(2+)</name>
        <dbReference type="ChEBI" id="CHEBI:18420"/>
    </cofactor>
</comment>
<comment type="similarity">
    <text evidence="1">Belongs to the TRAFAC class TrmE-Era-EngA-EngB-Septin-like GTPase superfamily. EngB GTPase family.</text>
</comment>
<reference key="1">
    <citation type="submission" date="2009-06" db="EMBL/GenBank/DDBJ databases">
        <title>Complete sequence of Desulfovibrio salexigens DSM 2638.</title>
        <authorList>
            <consortium name="US DOE Joint Genome Institute"/>
            <person name="Lucas S."/>
            <person name="Copeland A."/>
            <person name="Lapidus A."/>
            <person name="Glavina del Rio T."/>
            <person name="Tice H."/>
            <person name="Bruce D."/>
            <person name="Goodwin L."/>
            <person name="Pitluck S."/>
            <person name="Munk A.C."/>
            <person name="Brettin T."/>
            <person name="Detter J.C."/>
            <person name="Han C."/>
            <person name="Tapia R."/>
            <person name="Larimer F."/>
            <person name="Land M."/>
            <person name="Hauser L."/>
            <person name="Kyrpides N."/>
            <person name="Anderson I."/>
            <person name="Wall J.D."/>
            <person name="Arkin A.P."/>
            <person name="Dehal P."/>
            <person name="Chivian D."/>
            <person name="Giles B."/>
            <person name="Hazen T.C."/>
        </authorList>
    </citation>
    <scope>NUCLEOTIDE SEQUENCE [LARGE SCALE GENOMIC DNA]</scope>
    <source>
        <strain>ATCC 14822 / DSM 2638 / NCIMB 8403 / VKM B-1763</strain>
    </source>
</reference>
<accession>C6BUE5</accession>
<dbReference type="EMBL" id="CP001649">
    <property type="protein sequence ID" value="ACS79954.1"/>
    <property type="molecule type" value="Genomic_DNA"/>
</dbReference>
<dbReference type="RefSeq" id="WP_015851770.1">
    <property type="nucleotide sequence ID" value="NC_012881.1"/>
</dbReference>
<dbReference type="SMR" id="C6BUE5"/>
<dbReference type="STRING" id="526222.Desal_1893"/>
<dbReference type="KEGG" id="dsa:Desal_1893"/>
<dbReference type="eggNOG" id="COG0218">
    <property type="taxonomic scope" value="Bacteria"/>
</dbReference>
<dbReference type="HOGENOM" id="CLU_033732_3_0_7"/>
<dbReference type="OrthoDB" id="9804921at2"/>
<dbReference type="Proteomes" id="UP000002601">
    <property type="component" value="Chromosome"/>
</dbReference>
<dbReference type="GO" id="GO:0005829">
    <property type="term" value="C:cytosol"/>
    <property type="evidence" value="ECO:0007669"/>
    <property type="project" value="TreeGrafter"/>
</dbReference>
<dbReference type="GO" id="GO:0005525">
    <property type="term" value="F:GTP binding"/>
    <property type="evidence" value="ECO:0007669"/>
    <property type="project" value="UniProtKB-UniRule"/>
</dbReference>
<dbReference type="GO" id="GO:0046872">
    <property type="term" value="F:metal ion binding"/>
    <property type="evidence" value="ECO:0007669"/>
    <property type="project" value="UniProtKB-KW"/>
</dbReference>
<dbReference type="GO" id="GO:0000917">
    <property type="term" value="P:division septum assembly"/>
    <property type="evidence" value="ECO:0007669"/>
    <property type="project" value="UniProtKB-KW"/>
</dbReference>
<dbReference type="CDD" id="cd01876">
    <property type="entry name" value="YihA_EngB"/>
    <property type="match status" value="1"/>
</dbReference>
<dbReference type="Gene3D" id="3.40.50.300">
    <property type="entry name" value="P-loop containing nucleotide triphosphate hydrolases"/>
    <property type="match status" value="1"/>
</dbReference>
<dbReference type="HAMAP" id="MF_00321">
    <property type="entry name" value="GTPase_EngB"/>
    <property type="match status" value="1"/>
</dbReference>
<dbReference type="InterPro" id="IPR030393">
    <property type="entry name" value="G_ENGB_dom"/>
</dbReference>
<dbReference type="InterPro" id="IPR006073">
    <property type="entry name" value="GTP-bd"/>
</dbReference>
<dbReference type="InterPro" id="IPR019987">
    <property type="entry name" value="GTP-bd_ribosome_bio_YsxC"/>
</dbReference>
<dbReference type="InterPro" id="IPR027417">
    <property type="entry name" value="P-loop_NTPase"/>
</dbReference>
<dbReference type="NCBIfam" id="TIGR03598">
    <property type="entry name" value="GTPase_YsxC"/>
    <property type="match status" value="1"/>
</dbReference>
<dbReference type="PANTHER" id="PTHR11649:SF13">
    <property type="entry name" value="ENGB-TYPE G DOMAIN-CONTAINING PROTEIN"/>
    <property type="match status" value="1"/>
</dbReference>
<dbReference type="PANTHER" id="PTHR11649">
    <property type="entry name" value="MSS1/TRME-RELATED GTP-BINDING PROTEIN"/>
    <property type="match status" value="1"/>
</dbReference>
<dbReference type="Pfam" id="PF01926">
    <property type="entry name" value="MMR_HSR1"/>
    <property type="match status" value="1"/>
</dbReference>
<dbReference type="SUPFAM" id="SSF52540">
    <property type="entry name" value="P-loop containing nucleoside triphosphate hydrolases"/>
    <property type="match status" value="1"/>
</dbReference>
<dbReference type="PROSITE" id="PS51706">
    <property type="entry name" value="G_ENGB"/>
    <property type="match status" value="1"/>
</dbReference>
<keyword id="KW-0131">Cell cycle</keyword>
<keyword id="KW-0132">Cell division</keyword>
<keyword id="KW-0342">GTP-binding</keyword>
<keyword id="KW-0460">Magnesium</keyword>
<keyword id="KW-0479">Metal-binding</keyword>
<keyword id="KW-0547">Nucleotide-binding</keyword>
<keyword id="KW-1185">Reference proteome</keyword>
<keyword id="KW-0717">Septation</keyword>